<feature type="chain" id="PRO_1000092816" description="Heat-inducible transcription repressor HrcA">
    <location>
        <begin position="1"/>
        <end position="343"/>
    </location>
</feature>
<sequence length="343" mass="38932">MDLSPRHRSILKALVEEFVSDNKPVGSKTLSEKYDIGLSPATIRSCLAELEDMGFIVARHTSGGRVPTERGYRLYVDSLVTLFELTMREKQRIQEEYLRMQFRLDQVLIATSKVLASLSQSASVVLGPEGSLDTLKHIELIHVNGGEVLMILVMRSGTVLNRNIFFDFHISQETLYQISRYLNDNVKGFDVHEIQSNLIPQMMLKKEGPEGFTLFAPSIARAMGTDSHSVDNLYIDGLKNLYENFKDEEEQLENILHLFDEKQFLKEFFSDYVPMDGVYTIIGKDGNEKLGGVTIITTNYRMGEKRIGSMGIIGPQRMNYNKALPLIEFTSKLVSEMITKLSR</sequence>
<dbReference type="EMBL" id="CP000777">
    <property type="protein sequence ID" value="ABZ95734.1"/>
    <property type="molecule type" value="Genomic_DNA"/>
</dbReference>
<dbReference type="RefSeq" id="WP_012476458.1">
    <property type="nucleotide sequence ID" value="NC_010842.1"/>
</dbReference>
<dbReference type="SMR" id="B0SHT3"/>
<dbReference type="KEGG" id="lbf:LBF_3267"/>
<dbReference type="HOGENOM" id="CLU_050019_1_0_12"/>
<dbReference type="GO" id="GO:0003677">
    <property type="term" value="F:DNA binding"/>
    <property type="evidence" value="ECO:0007669"/>
    <property type="project" value="InterPro"/>
</dbReference>
<dbReference type="GO" id="GO:0045892">
    <property type="term" value="P:negative regulation of DNA-templated transcription"/>
    <property type="evidence" value="ECO:0007669"/>
    <property type="project" value="UniProtKB-UniRule"/>
</dbReference>
<dbReference type="Gene3D" id="3.30.450.40">
    <property type="match status" value="1"/>
</dbReference>
<dbReference type="Gene3D" id="3.30.390.60">
    <property type="entry name" value="Heat-inducible transcription repressor hrca homolog, domain 3"/>
    <property type="match status" value="1"/>
</dbReference>
<dbReference type="Gene3D" id="1.10.10.10">
    <property type="entry name" value="Winged helix-like DNA-binding domain superfamily/Winged helix DNA-binding domain"/>
    <property type="match status" value="1"/>
</dbReference>
<dbReference type="HAMAP" id="MF_00081">
    <property type="entry name" value="HrcA"/>
    <property type="match status" value="1"/>
</dbReference>
<dbReference type="InterPro" id="IPR029016">
    <property type="entry name" value="GAF-like_dom_sf"/>
</dbReference>
<dbReference type="InterPro" id="IPR002571">
    <property type="entry name" value="HrcA"/>
</dbReference>
<dbReference type="InterPro" id="IPR021153">
    <property type="entry name" value="HrcA_C"/>
</dbReference>
<dbReference type="InterPro" id="IPR036388">
    <property type="entry name" value="WH-like_DNA-bd_sf"/>
</dbReference>
<dbReference type="InterPro" id="IPR036390">
    <property type="entry name" value="WH_DNA-bd_sf"/>
</dbReference>
<dbReference type="InterPro" id="IPR023120">
    <property type="entry name" value="WHTH_transcript_rep_HrcA_IDD"/>
</dbReference>
<dbReference type="NCBIfam" id="TIGR00331">
    <property type="entry name" value="hrcA"/>
    <property type="match status" value="1"/>
</dbReference>
<dbReference type="PANTHER" id="PTHR34824">
    <property type="entry name" value="HEAT-INDUCIBLE TRANSCRIPTION REPRESSOR HRCA"/>
    <property type="match status" value="1"/>
</dbReference>
<dbReference type="PANTHER" id="PTHR34824:SF1">
    <property type="entry name" value="HEAT-INDUCIBLE TRANSCRIPTION REPRESSOR HRCA"/>
    <property type="match status" value="1"/>
</dbReference>
<dbReference type="Pfam" id="PF01628">
    <property type="entry name" value="HrcA"/>
    <property type="match status" value="1"/>
</dbReference>
<dbReference type="PIRSF" id="PIRSF005485">
    <property type="entry name" value="HrcA"/>
    <property type="match status" value="1"/>
</dbReference>
<dbReference type="SUPFAM" id="SSF55781">
    <property type="entry name" value="GAF domain-like"/>
    <property type="match status" value="1"/>
</dbReference>
<dbReference type="SUPFAM" id="SSF46785">
    <property type="entry name" value="Winged helix' DNA-binding domain"/>
    <property type="match status" value="1"/>
</dbReference>
<keyword id="KW-0678">Repressor</keyword>
<keyword id="KW-0346">Stress response</keyword>
<keyword id="KW-0804">Transcription</keyword>
<keyword id="KW-0805">Transcription regulation</keyword>
<proteinExistence type="inferred from homology"/>
<name>HRCA_LEPBA</name>
<reference key="1">
    <citation type="journal article" date="2008" name="PLoS ONE">
        <title>Genome sequence of the saprophyte Leptospira biflexa provides insights into the evolution of Leptospira and the pathogenesis of leptospirosis.</title>
        <authorList>
            <person name="Picardeau M."/>
            <person name="Bulach D.M."/>
            <person name="Bouchier C."/>
            <person name="Zuerner R.L."/>
            <person name="Zidane N."/>
            <person name="Wilson P.J."/>
            <person name="Creno S."/>
            <person name="Kuczek E.S."/>
            <person name="Bommezzadri S."/>
            <person name="Davis J.C."/>
            <person name="McGrath A."/>
            <person name="Johnson M.J."/>
            <person name="Boursaux-Eude C."/>
            <person name="Seemann T."/>
            <person name="Rouy Z."/>
            <person name="Coppel R.L."/>
            <person name="Rood J.I."/>
            <person name="Lajus A."/>
            <person name="Davies J.K."/>
            <person name="Medigue C."/>
            <person name="Adler B."/>
        </authorList>
    </citation>
    <scope>NUCLEOTIDE SEQUENCE [LARGE SCALE GENOMIC DNA]</scope>
    <source>
        <strain>Patoc 1 / Ames</strain>
    </source>
</reference>
<protein>
    <recommendedName>
        <fullName evidence="1">Heat-inducible transcription repressor HrcA</fullName>
    </recommendedName>
</protein>
<organism>
    <name type="scientific">Leptospira biflexa serovar Patoc (strain Patoc 1 / Ames)</name>
    <dbReference type="NCBI Taxonomy" id="355278"/>
    <lineage>
        <taxon>Bacteria</taxon>
        <taxon>Pseudomonadati</taxon>
        <taxon>Spirochaetota</taxon>
        <taxon>Spirochaetia</taxon>
        <taxon>Leptospirales</taxon>
        <taxon>Leptospiraceae</taxon>
        <taxon>Leptospira</taxon>
    </lineage>
</organism>
<accession>B0SHT3</accession>
<gene>
    <name evidence="1" type="primary">hrcA</name>
    <name type="ordered locus">LBF_3267</name>
</gene>
<comment type="function">
    <text evidence="1">Negative regulator of class I heat shock genes (grpE-dnaK-dnaJ and groELS operons). Prevents heat-shock induction of these operons.</text>
</comment>
<comment type="similarity">
    <text evidence="1">Belongs to the HrcA family.</text>
</comment>
<evidence type="ECO:0000255" key="1">
    <source>
        <dbReference type="HAMAP-Rule" id="MF_00081"/>
    </source>
</evidence>